<gene>
    <name evidence="4" type="primary">SHI1</name>
    <name evidence="9" type="ordered locus">Os09g0531600</name>
    <name evidence="5" type="ordered locus">LOC_Os09g36160</name>
    <name evidence="8" type="ORF">OJ1254_E07.16</name>
    <name evidence="10" type="ORF">OsJ_30107</name>
    <name evidence="7" type="ORF">P0515E01.1</name>
</gene>
<organism>
    <name type="scientific">Oryza sativa subsp. japonica</name>
    <name type="common">Rice</name>
    <dbReference type="NCBI Taxonomy" id="39947"/>
    <lineage>
        <taxon>Eukaryota</taxon>
        <taxon>Viridiplantae</taxon>
        <taxon>Streptophyta</taxon>
        <taxon>Embryophyta</taxon>
        <taxon>Tracheophyta</taxon>
        <taxon>Spermatophyta</taxon>
        <taxon>Magnoliopsida</taxon>
        <taxon>Liliopsida</taxon>
        <taxon>Poales</taxon>
        <taxon>Poaceae</taxon>
        <taxon>BOP clade</taxon>
        <taxon>Oryzoideae</taxon>
        <taxon>Oryzeae</taxon>
        <taxon>Oryzinae</taxon>
        <taxon>Oryza</taxon>
        <taxon>Oryza sativa</taxon>
    </lineage>
</organism>
<name>SHI1_ORYSJ</name>
<evidence type="ECO:0000250" key="1">
    <source>
        <dbReference type="UniProtKB" id="P04386"/>
    </source>
</evidence>
<evidence type="ECO:0000256" key="2">
    <source>
        <dbReference type="SAM" id="MobiDB-lite"/>
    </source>
</evidence>
<evidence type="ECO:0000269" key="3">
    <source>
    </source>
</evidence>
<evidence type="ECO:0000303" key="4">
    <source>
    </source>
</evidence>
<evidence type="ECO:0000305" key="5"/>
<evidence type="ECO:0000305" key="6">
    <source>
    </source>
</evidence>
<evidence type="ECO:0000312" key="7">
    <source>
        <dbReference type="EMBL" id="BAD46016.1"/>
    </source>
</evidence>
<evidence type="ECO:0000312" key="8">
    <source>
        <dbReference type="EMBL" id="BAD46263.1"/>
    </source>
</evidence>
<evidence type="ECO:0000312" key="9">
    <source>
        <dbReference type="EMBL" id="BAT09102.1"/>
    </source>
</evidence>
<evidence type="ECO:0000312" key="10">
    <source>
        <dbReference type="EMBL" id="EAZ45455.1"/>
    </source>
</evidence>
<sequence length="315" mass="32022">MAGFPLGGGSHSRDNPAPPVPPVHPADAASFLYATRGGSFQLWQQQEQQPFYASNIIRFADDAPPAPSLAGASSSSSSRGMRSSGGGGGGGGGGISCQDCGNQAKKDCTHMRCRTCCKSRGFACATHVKSTWVPAAKRRERQQQLAALAASAAATAGGAGPSRDPTKRPRARPSATTPTTSSGDQQMVTVAERFPREVSSEAVFRCVRLGPVDQAEAEVAYQTAVSIGGHVFKGILHDVGPEALAVAGGGGASEYHFRLTGDGSSPSTAAAGEAGSGGGGNIIVSSAVVMDPYPTPGPYGAFPAGTPFFHGHPRP</sequence>
<feature type="chain" id="PRO_0000453484" description="Protein SHORT INTERNODES 1">
    <location>
        <begin position="1"/>
        <end position="315"/>
    </location>
</feature>
<feature type="DNA-binding region" description="Zn(2)-C6 fungal-type; degenerate" evidence="6">
    <location>
        <begin position="97"/>
        <end position="124"/>
    </location>
</feature>
<feature type="region of interest" description="Disordered" evidence="2">
    <location>
        <begin position="1"/>
        <end position="24"/>
    </location>
</feature>
<feature type="region of interest" description="Disordered" evidence="2">
    <location>
        <begin position="64"/>
        <end position="92"/>
    </location>
</feature>
<feature type="region of interest" description="Disordered" evidence="2">
    <location>
        <begin position="143"/>
        <end position="186"/>
    </location>
</feature>
<feature type="short sequence motif" description="Required for homo- and heterodimerization" evidence="6">
    <location>
        <begin position="227"/>
        <end position="230"/>
    </location>
</feature>
<feature type="compositionally biased region" description="Gly residues" evidence="2">
    <location>
        <begin position="1"/>
        <end position="10"/>
    </location>
</feature>
<feature type="compositionally biased region" description="Low complexity" evidence="2">
    <location>
        <begin position="70"/>
        <end position="82"/>
    </location>
</feature>
<feature type="compositionally biased region" description="Gly residues" evidence="2">
    <location>
        <begin position="83"/>
        <end position="92"/>
    </location>
</feature>
<feature type="compositionally biased region" description="Low complexity" evidence="2">
    <location>
        <begin position="143"/>
        <end position="156"/>
    </location>
</feature>
<feature type="compositionally biased region" description="Low complexity" evidence="2">
    <location>
        <begin position="172"/>
        <end position="182"/>
    </location>
</feature>
<feature type="binding site" evidence="1">
    <location>
        <position position="97"/>
    </location>
    <ligand>
        <name>Zn(2+)</name>
        <dbReference type="ChEBI" id="CHEBI:29105"/>
        <label>1</label>
    </ligand>
</feature>
<feature type="binding site" evidence="1">
    <location>
        <position position="97"/>
    </location>
    <ligand>
        <name>Zn(2+)</name>
        <dbReference type="ChEBI" id="CHEBI:29105"/>
        <label>2</label>
    </ligand>
</feature>
<feature type="binding site" evidence="1">
    <location>
        <position position="100"/>
    </location>
    <ligand>
        <name>Zn(2+)</name>
        <dbReference type="ChEBI" id="CHEBI:29105"/>
        <label>1</label>
    </ligand>
</feature>
<feature type="binding site" evidence="1">
    <location>
        <position position="108"/>
    </location>
    <ligand>
        <name>Zn(2+)</name>
        <dbReference type="ChEBI" id="CHEBI:29105"/>
        <label>1</label>
    </ligand>
</feature>
<feature type="binding site" evidence="1">
    <location>
        <position position="113"/>
    </location>
    <ligand>
        <name>Zn(2+)</name>
        <dbReference type="ChEBI" id="CHEBI:29105"/>
        <label>1</label>
    </ligand>
</feature>
<feature type="binding site" evidence="1">
    <location>
        <position position="113"/>
    </location>
    <ligand>
        <name>Zn(2+)</name>
        <dbReference type="ChEBI" id="CHEBI:29105"/>
        <label>2</label>
    </ligand>
</feature>
<feature type="binding site" evidence="1">
    <location>
        <position position="117"/>
    </location>
    <ligand>
        <name>Zn(2+)</name>
        <dbReference type="ChEBI" id="CHEBI:29105"/>
        <label>2</label>
    </ligand>
</feature>
<feature type="binding site" evidence="1">
    <location>
        <position position="124"/>
    </location>
    <ligand>
        <name>Zn(2+)</name>
        <dbReference type="ChEBI" id="CHEBI:29105"/>
        <label>2</label>
    </ligand>
</feature>
<feature type="sequence conflict" description="In Ref. 4; EAZ45455." evidence="5" ref="4">
    <original>R</original>
    <variation>P</variation>
    <location>
        <position position="120"/>
    </location>
</feature>
<feature type="sequence conflict" description="In Ref. 4; EAZ45455." evidence="5" ref="4">
    <original>A</original>
    <variation>D</variation>
    <location>
        <position position="153"/>
    </location>
</feature>
<reference key="1">
    <citation type="journal article" date="2005" name="Nature">
        <title>The map-based sequence of the rice genome.</title>
        <authorList>
            <consortium name="International rice genome sequencing project (IRGSP)"/>
        </authorList>
    </citation>
    <scope>NUCLEOTIDE SEQUENCE [LARGE SCALE GENOMIC DNA]</scope>
    <source>
        <strain>cv. Nipponbare</strain>
    </source>
</reference>
<reference key="2">
    <citation type="journal article" date="2008" name="Nucleic Acids Res.">
        <title>The rice annotation project database (RAP-DB): 2008 update.</title>
        <authorList>
            <consortium name="The rice annotation project (RAP)"/>
        </authorList>
    </citation>
    <scope>GENOME REANNOTATION</scope>
    <source>
        <strain>cv. Nipponbare</strain>
    </source>
</reference>
<reference key="3">
    <citation type="journal article" date="2013" name="Rice">
        <title>Improvement of the Oryza sativa Nipponbare reference genome using next generation sequence and optical map data.</title>
        <authorList>
            <person name="Kawahara Y."/>
            <person name="de la Bastide M."/>
            <person name="Hamilton J.P."/>
            <person name="Kanamori H."/>
            <person name="McCombie W.R."/>
            <person name="Ouyang S."/>
            <person name="Schwartz D.C."/>
            <person name="Tanaka T."/>
            <person name="Wu J."/>
            <person name="Zhou S."/>
            <person name="Childs K.L."/>
            <person name="Davidson R.M."/>
            <person name="Lin H."/>
            <person name="Quesada-Ocampo L."/>
            <person name="Vaillancourt B."/>
            <person name="Sakai H."/>
            <person name="Lee S.S."/>
            <person name="Kim J."/>
            <person name="Numa H."/>
            <person name="Itoh T."/>
            <person name="Buell C.R."/>
            <person name="Matsumoto T."/>
        </authorList>
    </citation>
    <scope>GENOME REANNOTATION</scope>
    <source>
        <strain>cv. Nipponbare</strain>
    </source>
</reference>
<reference key="4">
    <citation type="journal article" date="2005" name="PLoS Biol.">
        <title>The genomes of Oryza sativa: a history of duplications.</title>
        <authorList>
            <person name="Yu J."/>
            <person name="Wang J."/>
            <person name="Lin W."/>
            <person name="Li S."/>
            <person name="Li H."/>
            <person name="Zhou J."/>
            <person name="Ni P."/>
            <person name="Dong W."/>
            <person name="Hu S."/>
            <person name="Zeng C."/>
            <person name="Zhang J."/>
            <person name="Zhang Y."/>
            <person name="Li R."/>
            <person name="Xu Z."/>
            <person name="Li S."/>
            <person name="Li X."/>
            <person name="Zheng H."/>
            <person name="Cong L."/>
            <person name="Lin L."/>
            <person name="Yin J."/>
            <person name="Geng J."/>
            <person name="Li G."/>
            <person name="Shi J."/>
            <person name="Liu J."/>
            <person name="Lv H."/>
            <person name="Li J."/>
            <person name="Wang J."/>
            <person name="Deng Y."/>
            <person name="Ran L."/>
            <person name="Shi X."/>
            <person name="Wang X."/>
            <person name="Wu Q."/>
            <person name="Li C."/>
            <person name="Ren X."/>
            <person name="Wang J."/>
            <person name="Wang X."/>
            <person name="Li D."/>
            <person name="Liu D."/>
            <person name="Zhang X."/>
            <person name="Ji Z."/>
            <person name="Zhao W."/>
            <person name="Sun Y."/>
            <person name="Zhang Z."/>
            <person name="Bao J."/>
            <person name="Han Y."/>
            <person name="Dong L."/>
            <person name="Ji J."/>
            <person name="Chen P."/>
            <person name="Wu S."/>
            <person name="Liu J."/>
            <person name="Xiao Y."/>
            <person name="Bu D."/>
            <person name="Tan J."/>
            <person name="Yang L."/>
            <person name="Ye C."/>
            <person name="Zhang J."/>
            <person name="Xu J."/>
            <person name="Zhou Y."/>
            <person name="Yu Y."/>
            <person name="Zhang B."/>
            <person name="Zhuang S."/>
            <person name="Wei H."/>
            <person name="Liu B."/>
            <person name="Lei M."/>
            <person name="Yu H."/>
            <person name="Li Y."/>
            <person name="Xu H."/>
            <person name="Wei S."/>
            <person name="He X."/>
            <person name="Fang L."/>
            <person name="Zhang Z."/>
            <person name="Zhang Y."/>
            <person name="Huang X."/>
            <person name="Su Z."/>
            <person name="Tong W."/>
            <person name="Li J."/>
            <person name="Tong Z."/>
            <person name="Li S."/>
            <person name="Ye J."/>
            <person name="Wang L."/>
            <person name="Fang L."/>
            <person name="Lei T."/>
            <person name="Chen C.-S."/>
            <person name="Chen H.-C."/>
            <person name="Xu Z."/>
            <person name="Li H."/>
            <person name="Huang H."/>
            <person name="Zhang F."/>
            <person name="Xu H."/>
            <person name="Li N."/>
            <person name="Zhao C."/>
            <person name="Li S."/>
            <person name="Dong L."/>
            <person name="Huang Y."/>
            <person name="Li L."/>
            <person name="Xi Y."/>
            <person name="Qi Q."/>
            <person name="Li W."/>
            <person name="Zhang B."/>
            <person name="Hu W."/>
            <person name="Zhang Y."/>
            <person name="Tian X."/>
            <person name="Jiao Y."/>
            <person name="Liang X."/>
            <person name="Jin J."/>
            <person name="Gao L."/>
            <person name="Zheng W."/>
            <person name="Hao B."/>
            <person name="Liu S.-M."/>
            <person name="Wang W."/>
            <person name="Yuan L."/>
            <person name="Cao M."/>
            <person name="McDermott J."/>
            <person name="Samudrala R."/>
            <person name="Wang J."/>
            <person name="Wong G.K.-S."/>
            <person name="Yang H."/>
        </authorList>
    </citation>
    <scope>NUCLEOTIDE SEQUENCE [LARGE SCALE GENOMIC DNA]</scope>
    <source>
        <strain>cv. Nipponbare</strain>
    </source>
</reference>
<reference key="5">
    <citation type="submission" date="2006-10" db="EMBL/GenBank/DDBJ databases">
        <title>Oryza sativa full length cDNA.</title>
        <authorList>
            <consortium name="The rice full-length cDNA consortium"/>
        </authorList>
    </citation>
    <scope>NUCLEOTIDE SEQUENCE [LARGE SCALE MRNA]</scope>
    <source>
        <strain>cv. Nipponbare</strain>
    </source>
</reference>
<reference key="6">
    <citation type="journal article" date="2019" name="Plant Cell">
        <title>OsSHI1 regulates plant architecture through modulating the transcriptional activity of IPA1 in rice.</title>
        <authorList>
            <person name="Duan E."/>
            <person name="Wang Y."/>
            <person name="Li X."/>
            <person name="Lin Q."/>
            <person name="Zhang T."/>
            <person name="Wang Y."/>
            <person name="Zhou C."/>
            <person name="Zhang H."/>
            <person name="Jiang L."/>
            <person name="Wang J."/>
            <person name="Lei C."/>
            <person name="Zhang X."/>
            <person name="Guo X."/>
            <person name="Wang H."/>
            <person name="Wan J."/>
        </authorList>
    </citation>
    <scope>FUNCTION</scope>
    <scope>HOMODIMERIZATION</scope>
    <scope>INTERACTION WITH SPL14</scope>
    <scope>SUBCELLULAR LOCATION</scope>
    <scope>TISSUE SPECIFICITY</scope>
    <scope>DISRUPTION PHENOTYPE</scope>
</reference>
<dbReference type="EMBL" id="AP005314">
    <property type="protein sequence ID" value="BAD46016.1"/>
    <property type="molecule type" value="Genomic_DNA"/>
</dbReference>
<dbReference type="EMBL" id="AP005567">
    <property type="protein sequence ID" value="BAD46263.1"/>
    <property type="molecule type" value="Genomic_DNA"/>
</dbReference>
<dbReference type="EMBL" id="AP008215">
    <property type="protein sequence ID" value="BAF25669.2"/>
    <property type="status" value="ALT_SEQ"/>
    <property type="molecule type" value="Genomic_DNA"/>
</dbReference>
<dbReference type="EMBL" id="AP014965">
    <property type="protein sequence ID" value="BAT09102.1"/>
    <property type="molecule type" value="Genomic_DNA"/>
</dbReference>
<dbReference type="EMBL" id="CM000146">
    <property type="protein sequence ID" value="EAZ45455.1"/>
    <property type="molecule type" value="Genomic_DNA"/>
</dbReference>
<dbReference type="EMBL" id="AK241285">
    <property type="protein sequence ID" value="BAH00998.1"/>
    <property type="molecule type" value="mRNA"/>
</dbReference>
<dbReference type="FunCoup" id="Q652K4">
    <property type="interactions" value="1208"/>
</dbReference>
<dbReference type="PaxDb" id="39947-Q652K4"/>
<dbReference type="EnsemblPlants" id="Os09t0531600-01">
    <property type="protein sequence ID" value="Os09t0531600-01"/>
    <property type="gene ID" value="Os09g0531600"/>
</dbReference>
<dbReference type="GeneID" id="4347669"/>
<dbReference type="Gramene" id="Os09t0531600-01">
    <property type="protein sequence ID" value="Os09t0531600-01"/>
    <property type="gene ID" value="Os09g0531600"/>
</dbReference>
<dbReference type="KEGG" id="dosa:Os09g0531600"/>
<dbReference type="KEGG" id="osa:4347669"/>
<dbReference type="eggNOG" id="ENOG502QQ15">
    <property type="taxonomic scope" value="Eukaryota"/>
</dbReference>
<dbReference type="HOGENOM" id="CLU_041493_1_0_1"/>
<dbReference type="InParanoid" id="Q652K4"/>
<dbReference type="OMA" id="YPAPINT"/>
<dbReference type="OrthoDB" id="692274at2759"/>
<dbReference type="Proteomes" id="UP000000763">
    <property type="component" value="Chromosome 9"/>
</dbReference>
<dbReference type="Proteomes" id="UP000007752">
    <property type="component" value="Chromosome 9"/>
</dbReference>
<dbReference type="Proteomes" id="UP000059680">
    <property type="component" value="Chromosome 9"/>
</dbReference>
<dbReference type="GO" id="GO:0005634">
    <property type="term" value="C:nucleus"/>
    <property type="evidence" value="ECO:0000314"/>
    <property type="project" value="UniProtKB"/>
</dbReference>
<dbReference type="GO" id="GO:0003677">
    <property type="term" value="F:DNA binding"/>
    <property type="evidence" value="ECO:0000318"/>
    <property type="project" value="GO_Central"/>
</dbReference>
<dbReference type="GO" id="GO:0003700">
    <property type="term" value="F:DNA-binding transcription factor activity"/>
    <property type="evidence" value="ECO:0000314"/>
    <property type="project" value="UniProtKB"/>
</dbReference>
<dbReference type="GO" id="GO:0046872">
    <property type="term" value="F:metal ion binding"/>
    <property type="evidence" value="ECO:0007669"/>
    <property type="project" value="UniProtKB-KW"/>
</dbReference>
<dbReference type="GO" id="GO:0042803">
    <property type="term" value="F:protein homodimerization activity"/>
    <property type="evidence" value="ECO:0000314"/>
    <property type="project" value="UniProtKB"/>
</dbReference>
<dbReference type="GO" id="GO:0043565">
    <property type="term" value="F:sequence-specific DNA binding"/>
    <property type="evidence" value="ECO:0000314"/>
    <property type="project" value="UniProtKB"/>
</dbReference>
<dbReference type="GO" id="GO:0048450">
    <property type="term" value="P:floral organ structural organization"/>
    <property type="evidence" value="ECO:0000315"/>
    <property type="project" value="UniProtKB"/>
</dbReference>
<dbReference type="GO" id="GO:0045893">
    <property type="term" value="P:positive regulation of DNA-templated transcription"/>
    <property type="evidence" value="ECO:0000318"/>
    <property type="project" value="GO_Central"/>
</dbReference>
<dbReference type="GO" id="GO:0006355">
    <property type="term" value="P:regulation of DNA-templated transcription"/>
    <property type="evidence" value="ECO:0000314"/>
    <property type="project" value="UniProtKB"/>
</dbReference>
<dbReference type="InterPro" id="IPR007818">
    <property type="entry name" value="SHI"/>
</dbReference>
<dbReference type="InterPro" id="IPR006511">
    <property type="entry name" value="SHI_C"/>
</dbReference>
<dbReference type="InterPro" id="IPR006510">
    <property type="entry name" value="Znf_LRP1"/>
</dbReference>
<dbReference type="NCBIfam" id="TIGR01624">
    <property type="entry name" value="LRP1_Cterm"/>
    <property type="match status" value="1"/>
</dbReference>
<dbReference type="NCBIfam" id="TIGR01623">
    <property type="entry name" value="put_zinc_LRP1"/>
    <property type="match status" value="1"/>
</dbReference>
<dbReference type="PANTHER" id="PTHR31604">
    <property type="entry name" value="PROTEIN LATERAL ROOT PRIMORDIUM 1"/>
    <property type="match status" value="1"/>
</dbReference>
<dbReference type="PANTHER" id="PTHR31604:SF57">
    <property type="entry name" value="PROTEIN SHORT INTERNODES 1"/>
    <property type="match status" value="1"/>
</dbReference>
<dbReference type="Pfam" id="PF05142">
    <property type="entry name" value="DUF702"/>
    <property type="match status" value="1"/>
</dbReference>
<accession>Q652K4</accession>
<accession>A0A0P0XQ70</accession>
<accession>A3C0W6</accession>
<accession>Q0J046</accession>
<comment type="function">
    <text evidence="3">Regulates tillering and panicle branching by modulating SPL14/IPA1 transcriptional activity on the downstream TB1 and DEP1 target genes (PubMed:30914468). Binds directly to the 5'-T/GCTCTAC-3' DNA motif found in the promoter regions of both TB1 and DEP1 (PubMed:30914468). Represses the DNA binding activity of SPL14/IPA1 toward the promoters of both TB1 and DEP1 (PubMed:30914468). Exhibits weak transcriptional activation activity in yeast cells (PubMed:30914468).</text>
</comment>
<comment type="subunit">
    <text evidence="3">Forms homodimers (via C-terminus) (PubMed:30914468). Interacts with SPL14/IPA1 (via C-terminus) (PubMed:30914468).</text>
</comment>
<comment type="subcellular location">
    <subcellularLocation>
        <location evidence="3">Nucleus</location>
    </subcellularLocation>
</comment>
<comment type="tissue specificity">
    <text evidence="3">Predominantly expressed in axillary buds and young panicles.</text>
</comment>
<comment type="disruption phenotype">
    <text evidence="3">Significant reduced tiller number, enhanced culm strength, increased panicle branch numbers and reduced grain size.</text>
</comment>
<comment type="similarity">
    <text evidence="5">Belongs to the SHI protein family.</text>
</comment>
<comment type="sequence caution" evidence="5">
    <conflict type="erroneous gene model prediction">
        <sequence resource="EMBL-CDS" id="BAF25669"/>
    </conflict>
</comment>
<proteinExistence type="evidence at protein level"/>
<keyword id="KW-0010">Activator</keyword>
<keyword id="KW-0238">DNA-binding</keyword>
<keyword id="KW-0479">Metal-binding</keyword>
<keyword id="KW-0539">Nucleus</keyword>
<keyword id="KW-1185">Reference proteome</keyword>
<keyword id="KW-0804">Transcription</keyword>
<keyword id="KW-0805">Transcription regulation</keyword>
<keyword id="KW-0862">Zinc</keyword>
<protein>
    <recommendedName>
        <fullName evidence="4">Protein SHORT INTERNODES 1</fullName>
        <shortName evidence="4">OsSHI1</shortName>
    </recommendedName>
</protein>